<name>LEG9_BOVIN</name>
<accession>Q3MHZ8</accession>
<protein>
    <recommendedName>
        <fullName>Galectin-9</fullName>
        <shortName>Gal-9</shortName>
    </recommendedName>
</protein>
<feature type="chain" id="PRO_0000283031" description="Galectin-9">
    <location>
        <begin position="1"/>
        <end position="355"/>
    </location>
</feature>
<feature type="domain" description="Galectin 1" evidence="5">
    <location>
        <begin position="17"/>
        <end position="148"/>
    </location>
</feature>
<feature type="domain" description="Galectin 2" evidence="5">
    <location>
        <begin position="227"/>
        <end position="355"/>
    </location>
</feature>
<feature type="binding site" evidence="1">
    <location>
        <position position="48"/>
    </location>
    <ligand>
        <name>a beta-D-galactoside</name>
        <dbReference type="ChEBI" id="CHEBI:28034"/>
        <label>1</label>
    </ligand>
</feature>
<feature type="binding site" evidence="1">
    <location>
        <position position="61"/>
    </location>
    <ligand>
        <name>a beta-D-galactoside</name>
        <dbReference type="ChEBI" id="CHEBI:28034"/>
        <label>1</label>
    </ligand>
</feature>
<feature type="binding site" evidence="1">
    <location>
        <position position="65"/>
    </location>
    <ligand>
        <name>a beta-D-galactoside</name>
        <dbReference type="ChEBI" id="CHEBI:28034"/>
        <label>1</label>
    </ligand>
</feature>
<feature type="binding site" evidence="1">
    <location>
        <position position="75"/>
    </location>
    <ligand>
        <name>a beta-D-galactoside</name>
        <dbReference type="ChEBI" id="CHEBI:28034"/>
        <label>1</label>
    </ligand>
</feature>
<feature type="binding site" evidence="1">
    <location>
        <begin position="82"/>
        <end position="88"/>
    </location>
    <ligand>
        <name>a beta-D-galactoside</name>
        <dbReference type="ChEBI" id="CHEBI:28034"/>
        <label>1</label>
    </ligand>
</feature>
<feature type="binding site" evidence="1">
    <location>
        <position position="267"/>
    </location>
    <ligand>
        <name>a beta-D-galactoside</name>
        <dbReference type="ChEBI" id="CHEBI:28034"/>
        <label>2</label>
    </ligand>
</feature>
<feature type="binding site" evidence="1">
    <location>
        <position position="271"/>
    </location>
    <ligand>
        <name>a beta-D-galactoside</name>
        <dbReference type="ChEBI" id="CHEBI:28034"/>
        <label>2</label>
    </ligand>
</feature>
<feature type="binding site" evidence="1">
    <location>
        <position position="281"/>
    </location>
    <ligand>
        <name>a beta-D-galactoside</name>
        <dbReference type="ChEBI" id="CHEBI:28034"/>
        <label>2</label>
    </ligand>
</feature>
<feature type="binding site" evidence="1">
    <location>
        <begin position="287"/>
        <end position="293"/>
    </location>
    <ligand>
        <name>a beta-D-galactoside</name>
        <dbReference type="ChEBI" id="CHEBI:28034"/>
        <label>2</label>
    </ligand>
</feature>
<organism>
    <name type="scientific">Bos taurus</name>
    <name type="common">Bovine</name>
    <dbReference type="NCBI Taxonomy" id="9913"/>
    <lineage>
        <taxon>Eukaryota</taxon>
        <taxon>Metazoa</taxon>
        <taxon>Chordata</taxon>
        <taxon>Craniata</taxon>
        <taxon>Vertebrata</taxon>
        <taxon>Euteleostomi</taxon>
        <taxon>Mammalia</taxon>
        <taxon>Eutheria</taxon>
        <taxon>Laurasiatheria</taxon>
        <taxon>Artiodactyla</taxon>
        <taxon>Ruminantia</taxon>
        <taxon>Pecora</taxon>
        <taxon>Bovidae</taxon>
        <taxon>Bovinae</taxon>
        <taxon>Bos</taxon>
    </lineage>
</organism>
<comment type="function">
    <text evidence="2 3 4">Binds galactosides. Has high affinity for the Forssman pentasaccharide. Ligand for HAVCR2/TIM3. Binding to HAVCR2 induces T-helper type 1 lymphocyte (Th1) death. Also stimulates bactericidal activity in infected macrophages by causing macrophage activation and IL1B secretion which restricts intracellular bacterial growth. Ligand for P4HB; the interaction retains P4HB at the cell surface of Th2 T helper cells, increasing disulfide reductase activity at the plasma membrane, altering the plasma membrane redox state and enhancing cell migration. Ligand for CD44; the interaction enhances binding of SMAD3 to the FOXP3 promoter, leading to up-regulation of FOXP3 expression and increased induced regulatory T (iTreg) cell stability and suppressive function. Promotes ability of mesenchymal stromal cells to suppress T-cell proliferation. Expands regulatory T-cells and induces cytotoxic T-cell apoptosis following virus infection. Activates ERK1/2 phosphorylation inducing cytokine (IL-6, IL-8, IL-12) and chemokine (CCL2) production in mast and dendritic cells. Inhibits degranulation and induces apoptosis of mast cells. Induces maturation and migration of dendritic cells. Inhibits natural killer (NK) cell function. Can transform NK cell phenotype from peripheral to decidual during pregnancy. Astrocyte derived galectin-9 enhances microglial TNF production. May play a role in thymocyte-epithelial interactions relevant to the biology of the thymus. May provide the molecular basis for urate flux across cell membranes, allowing urate that is formed during purine metabolism to efflux from cells and serving as an electrogenic transporter that plays an important role in renal and gastrointestinal urate excretion. Highly selective to the anion urate.</text>
</comment>
<comment type="subcellular location">
    <subcellularLocation>
        <location evidence="2">Cytoplasm</location>
    </subcellularLocation>
    <subcellularLocation>
        <location evidence="2">Nucleus</location>
    </subcellularLocation>
    <subcellularLocation>
        <location evidence="2">Secreted</location>
    </subcellularLocation>
    <text evidence="2 3">May also be secreted by a non-classical secretory pathway. Secreted by mesenchymal stromal cells upon IFNG stimulation.</text>
</comment>
<comment type="domain">
    <text>Contains two homologous but distinct carbohydrate-binding domains.</text>
</comment>
<keyword id="KW-0963">Cytoplasm</keyword>
<keyword id="KW-0391">Immunity</keyword>
<keyword id="KW-0430">Lectin</keyword>
<keyword id="KW-0539">Nucleus</keyword>
<keyword id="KW-1185">Reference proteome</keyword>
<keyword id="KW-0677">Repeat</keyword>
<keyword id="KW-0964">Secreted</keyword>
<dbReference type="EMBL" id="BC104505">
    <property type="protein sequence ID" value="AAI04506.1"/>
    <property type="molecule type" value="mRNA"/>
</dbReference>
<dbReference type="RefSeq" id="NP_001034266.1">
    <property type="nucleotide sequence ID" value="NM_001039177.2"/>
</dbReference>
<dbReference type="SMR" id="Q3MHZ8"/>
<dbReference type="FunCoup" id="Q3MHZ8">
    <property type="interactions" value="364"/>
</dbReference>
<dbReference type="STRING" id="9913.ENSBTAP00000009025"/>
<dbReference type="PaxDb" id="9913-ENSBTAP00000009025"/>
<dbReference type="GeneID" id="510813"/>
<dbReference type="KEGG" id="bta:510813"/>
<dbReference type="CTD" id="3965"/>
<dbReference type="eggNOG" id="KOG3587">
    <property type="taxonomic scope" value="Eukaryota"/>
</dbReference>
<dbReference type="InParanoid" id="Q3MHZ8"/>
<dbReference type="OrthoDB" id="5795596at2759"/>
<dbReference type="Proteomes" id="UP000009136">
    <property type="component" value="Unplaced"/>
</dbReference>
<dbReference type="GO" id="GO:0005829">
    <property type="term" value="C:cytosol"/>
    <property type="evidence" value="ECO:0000318"/>
    <property type="project" value="GO_Central"/>
</dbReference>
<dbReference type="GO" id="GO:0005576">
    <property type="term" value="C:extracellular region"/>
    <property type="evidence" value="ECO:0007669"/>
    <property type="project" value="UniProtKB-SubCell"/>
</dbReference>
<dbReference type="GO" id="GO:0005634">
    <property type="term" value="C:nucleus"/>
    <property type="evidence" value="ECO:0000318"/>
    <property type="project" value="GO_Central"/>
</dbReference>
<dbReference type="GO" id="GO:0030246">
    <property type="term" value="F:carbohydrate binding"/>
    <property type="evidence" value="ECO:0000250"/>
    <property type="project" value="UniProtKB"/>
</dbReference>
<dbReference type="GO" id="GO:0016936">
    <property type="term" value="F:galactoside binding"/>
    <property type="evidence" value="ECO:0000318"/>
    <property type="project" value="GO_Central"/>
</dbReference>
<dbReference type="GO" id="GO:0002376">
    <property type="term" value="P:immune system process"/>
    <property type="evidence" value="ECO:0007669"/>
    <property type="project" value="UniProtKB-KW"/>
</dbReference>
<dbReference type="GO" id="GO:2000562">
    <property type="term" value="P:negative regulation of CD4-positive, alpha-beta T cell proliferation"/>
    <property type="evidence" value="ECO:0000318"/>
    <property type="project" value="GO_Central"/>
</dbReference>
<dbReference type="GO" id="GO:0032689">
    <property type="term" value="P:negative regulation of type II interferon production"/>
    <property type="evidence" value="ECO:0000318"/>
    <property type="project" value="GO_Central"/>
</dbReference>
<dbReference type="GO" id="GO:0010628">
    <property type="term" value="P:positive regulation of gene expression"/>
    <property type="evidence" value="ECO:0000318"/>
    <property type="project" value="GO_Central"/>
</dbReference>
<dbReference type="CDD" id="cd00070">
    <property type="entry name" value="GLECT"/>
    <property type="match status" value="2"/>
</dbReference>
<dbReference type="FunFam" id="2.60.120.200:FF:000023">
    <property type="entry name" value="Galectin"/>
    <property type="match status" value="1"/>
</dbReference>
<dbReference type="FunFam" id="2.60.120.200:FF:000078">
    <property type="entry name" value="Galectin"/>
    <property type="match status" value="1"/>
</dbReference>
<dbReference type="Gene3D" id="2.60.120.200">
    <property type="match status" value="2"/>
</dbReference>
<dbReference type="InterPro" id="IPR013320">
    <property type="entry name" value="ConA-like_dom_sf"/>
</dbReference>
<dbReference type="InterPro" id="IPR044156">
    <property type="entry name" value="Galectin-like"/>
</dbReference>
<dbReference type="InterPro" id="IPR001079">
    <property type="entry name" value="Galectin_CRD"/>
</dbReference>
<dbReference type="PANTHER" id="PTHR11346">
    <property type="entry name" value="GALECTIN"/>
    <property type="match status" value="1"/>
</dbReference>
<dbReference type="PANTHER" id="PTHR11346:SF80">
    <property type="entry name" value="GALECTIN-9C"/>
    <property type="match status" value="1"/>
</dbReference>
<dbReference type="Pfam" id="PF00337">
    <property type="entry name" value="Gal-bind_lectin"/>
    <property type="match status" value="2"/>
</dbReference>
<dbReference type="SMART" id="SM00908">
    <property type="entry name" value="Gal-bind_lectin"/>
    <property type="match status" value="2"/>
</dbReference>
<dbReference type="SMART" id="SM00276">
    <property type="entry name" value="GLECT"/>
    <property type="match status" value="2"/>
</dbReference>
<dbReference type="SUPFAM" id="SSF49899">
    <property type="entry name" value="Concanavalin A-like lectins/glucanases"/>
    <property type="match status" value="2"/>
</dbReference>
<dbReference type="PROSITE" id="PS51304">
    <property type="entry name" value="GALECTIN"/>
    <property type="match status" value="2"/>
</dbReference>
<proteinExistence type="evidence at transcript level"/>
<evidence type="ECO:0000250" key="1"/>
<evidence type="ECO:0000250" key="2">
    <source>
        <dbReference type="UniProtKB" id="O00182"/>
    </source>
</evidence>
<evidence type="ECO:0000250" key="3">
    <source>
        <dbReference type="UniProtKB" id="O08573"/>
    </source>
</evidence>
<evidence type="ECO:0000250" key="4">
    <source>
        <dbReference type="UniProtKB" id="P97840"/>
    </source>
</evidence>
<evidence type="ECO:0000255" key="5">
    <source>
        <dbReference type="PROSITE-ProRule" id="PRU00639"/>
    </source>
</evidence>
<gene>
    <name type="primary">LGALS9</name>
</gene>
<reference key="1">
    <citation type="submission" date="2005-09" db="EMBL/GenBank/DDBJ databases">
        <authorList>
            <consortium name="NIH - Mammalian Gene Collection (MGC) project"/>
        </authorList>
    </citation>
    <scope>NUCLEOTIDE SEQUENCE [LARGE SCALE MRNA]</scope>
    <source>
        <strain>Hereford</strain>
        <tissue>Ascending colon</tissue>
    </source>
</reference>
<sequence>MAFGGAQASYINPVVPFTGMIQGGLQDGHKITIIGAVLPSGGNRFAVNLQTGYNDSDIAFHFNPRFEEGGYVVCNTKQRGSWGTEERKMHMPFQRGCSFELCFQVQSSDFRVMVNGNLFTQYAHRVPFHRIDAISITGVVQLSSISFQNIRAAPKQPACSKVQFSQAVCLPPRPRGRKSNPPGIWPANSAPIAQTFVHTIHSAPGQMFPNPVIPPAVYPNPVYQLPFFTSILGGLYPSKSILVSGTILPSAQRFYINLRSGSDIAFHLNPRFNENAVVRNTQINGSWGSEERSLPRGMPFFRGQSFSVWIMCEGHCFKVAVDSQHLFEYHHRLKNLPAINNLEVGGDIQLTHVQT</sequence>